<reference evidence="3" key="1">
    <citation type="journal article" date="2001" name="Planta">
        <title>Proteomic analysis reveals a novel set of cell wall proteins in a transformed tobacco cell culture that synthesises secondary walls as determined by biochemical and morphological parameters.</title>
        <authorList>
            <person name="Blee K.A."/>
            <person name="Wheatley E.R."/>
            <person name="Bonham V.A."/>
            <person name="Mitchell G.P."/>
            <person name="Robertson D."/>
            <person name="Slabas A.R."/>
            <person name="Burrell M.M."/>
            <person name="Wojtaszek P."/>
            <person name="Bolwell G.P."/>
        </authorList>
    </citation>
    <scope>PROTEIN SEQUENCE</scope>
    <scope>SUBCELLULAR LOCATION</scope>
    <source>
        <strain evidence="1">cv. Petit Havana</strain>
    </source>
</reference>
<protein>
    <recommendedName>
        <fullName>100 kDa cell wall protein</fullName>
    </recommendedName>
</protein>
<proteinExistence type="evidence at protein level"/>
<feature type="chain" id="PRO_0000079701" description="100 kDa cell wall protein">
    <location>
        <begin position="1"/>
        <end position="15" status="greater than"/>
    </location>
</feature>
<feature type="non-terminal residue" evidence="2">
    <location>
        <position position="15"/>
    </location>
</feature>
<evidence type="ECO:0000269" key="1">
    <source>
    </source>
</evidence>
<evidence type="ECO:0000303" key="2">
    <source>
    </source>
</evidence>
<evidence type="ECO:0000305" key="3"/>
<sequence>EPVKKKDLKKATVPL</sequence>
<keyword id="KW-0134">Cell wall</keyword>
<keyword id="KW-0903">Direct protein sequencing</keyword>
<keyword id="KW-1185">Reference proteome</keyword>
<keyword id="KW-0964">Secreted</keyword>
<organism>
    <name type="scientific">Nicotiana tabacum</name>
    <name type="common">Common tobacco</name>
    <dbReference type="NCBI Taxonomy" id="4097"/>
    <lineage>
        <taxon>Eukaryota</taxon>
        <taxon>Viridiplantae</taxon>
        <taxon>Streptophyta</taxon>
        <taxon>Embryophyta</taxon>
        <taxon>Tracheophyta</taxon>
        <taxon>Spermatophyta</taxon>
        <taxon>Magnoliopsida</taxon>
        <taxon>eudicotyledons</taxon>
        <taxon>Gunneridae</taxon>
        <taxon>Pentapetalae</taxon>
        <taxon>asterids</taxon>
        <taxon>lamiids</taxon>
        <taxon>Solanales</taxon>
        <taxon>Solanaceae</taxon>
        <taxon>Nicotianoideae</taxon>
        <taxon>Nicotianeae</taxon>
        <taxon>Nicotiana</taxon>
    </lineage>
</organism>
<name>CWP23_TOBAC</name>
<accession>P82431</accession>
<dbReference type="PaxDb" id="4097-P82431"/>
<dbReference type="Proteomes" id="UP000084051">
    <property type="component" value="Unplaced"/>
</dbReference>
<dbReference type="GO" id="GO:0005576">
    <property type="term" value="C:extracellular region"/>
    <property type="evidence" value="ECO:0007669"/>
    <property type="project" value="UniProtKB-KW"/>
</dbReference>
<comment type="subcellular location">
    <subcellularLocation>
        <location evidence="1">Secreted</location>
        <location evidence="1">Cell wall</location>
    </subcellularLocation>
</comment>